<proteinExistence type="inferred from homology"/>
<gene>
    <name evidence="1" type="primary">glgC</name>
    <name type="ordered locus">RPC_0611</name>
</gene>
<accession>Q21BQ2</accession>
<keyword id="KW-0067">ATP-binding</keyword>
<keyword id="KW-0119">Carbohydrate metabolism</keyword>
<keyword id="KW-0320">Glycogen biosynthesis</keyword>
<keyword id="KW-0321">Glycogen metabolism</keyword>
<keyword id="KW-0547">Nucleotide-binding</keyword>
<keyword id="KW-0548">Nucleotidyltransferase</keyword>
<keyword id="KW-0808">Transferase</keyword>
<reference key="1">
    <citation type="submission" date="2006-03" db="EMBL/GenBank/DDBJ databases">
        <title>Complete sequence of Rhodopseudomonas palustris BisB18.</title>
        <authorList>
            <consortium name="US DOE Joint Genome Institute"/>
            <person name="Copeland A."/>
            <person name="Lucas S."/>
            <person name="Lapidus A."/>
            <person name="Barry K."/>
            <person name="Detter J.C."/>
            <person name="Glavina del Rio T."/>
            <person name="Hammon N."/>
            <person name="Israni S."/>
            <person name="Dalin E."/>
            <person name="Tice H."/>
            <person name="Pitluck S."/>
            <person name="Chain P."/>
            <person name="Malfatti S."/>
            <person name="Shin M."/>
            <person name="Vergez L."/>
            <person name="Schmutz J."/>
            <person name="Larimer F."/>
            <person name="Land M."/>
            <person name="Hauser L."/>
            <person name="Pelletier D.A."/>
            <person name="Kyrpides N."/>
            <person name="Anderson I."/>
            <person name="Oda Y."/>
            <person name="Harwood C.S."/>
            <person name="Richardson P."/>
        </authorList>
    </citation>
    <scope>NUCLEOTIDE SEQUENCE [LARGE SCALE GENOMIC DNA]</scope>
    <source>
        <strain>BisB18</strain>
    </source>
</reference>
<sequence length="420" mass="46745">MSNGVNAPLARHAMAYVLAGGRGSRLMELTDRRAKPAVYFGGKSRIIDFALSNALNSGIRRIAVATQYKAHSLIRHLQHGWNFFRPERNESFDILPASQRVSEELWYLGTADAVYQNIDIIESYDPQFIVLLAGDHIYKMDYEQMLQQHVEQGADVTVGCLEVPRREASGFGVMAVDADDVIHSFVEKPANPPPMPGKPTMSLASMGIYVFDTKFLFEELRRDAADPNSSHDFGKDIIPYIVKHGKAVAHSFDRSCIRSHAEAASYWRDVGTVDAYWAANIDLCDIVPELDLYDHNWPIWTYGEIVPPAKFVHDKIGRRGEAISSLVSGGCIISGSTLRQTLLFTGVRVHSYSTIEQAVILPYVDVARSCQLTNVVIDRGVRIPEGLVVGEDPELDAARFHRTDAGICLITQPMIDRLEA</sequence>
<dbReference type="EC" id="2.7.7.27" evidence="1"/>
<dbReference type="EMBL" id="CP000301">
    <property type="protein sequence ID" value="ABD86184.1"/>
    <property type="molecule type" value="Genomic_DNA"/>
</dbReference>
<dbReference type="SMR" id="Q21BQ2"/>
<dbReference type="STRING" id="316056.RPC_0611"/>
<dbReference type="KEGG" id="rpc:RPC_0611"/>
<dbReference type="eggNOG" id="COG0448">
    <property type="taxonomic scope" value="Bacteria"/>
</dbReference>
<dbReference type="HOGENOM" id="CLU_029499_14_1_5"/>
<dbReference type="OrthoDB" id="9801810at2"/>
<dbReference type="UniPathway" id="UPA00164"/>
<dbReference type="GO" id="GO:0005524">
    <property type="term" value="F:ATP binding"/>
    <property type="evidence" value="ECO:0007669"/>
    <property type="project" value="UniProtKB-KW"/>
</dbReference>
<dbReference type="GO" id="GO:0008878">
    <property type="term" value="F:glucose-1-phosphate adenylyltransferase activity"/>
    <property type="evidence" value="ECO:0007669"/>
    <property type="project" value="UniProtKB-UniRule"/>
</dbReference>
<dbReference type="GO" id="GO:0005978">
    <property type="term" value="P:glycogen biosynthetic process"/>
    <property type="evidence" value="ECO:0007669"/>
    <property type="project" value="UniProtKB-UniRule"/>
</dbReference>
<dbReference type="CDD" id="cd02508">
    <property type="entry name" value="ADP_Glucose_PP"/>
    <property type="match status" value="1"/>
</dbReference>
<dbReference type="CDD" id="cd04651">
    <property type="entry name" value="LbH_G1P_AT_C"/>
    <property type="match status" value="1"/>
</dbReference>
<dbReference type="Gene3D" id="2.160.10.10">
    <property type="entry name" value="Hexapeptide repeat proteins"/>
    <property type="match status" value="1"/>
</dbReference>
<dbReference type="Gene3D" id="3.90.550.10">
    <property type="entry name" value="Spore Coat Polysaccharide Biosynthesis Protein SpsA, Chain A"/>
    <property type="match status" value="1"/>
</dbReference>
<dbReference type="HAMAP" id="MF_00624">
    <property type="entry name" value="GlgC"/>
    <property type="match status" value="1"/>
</dbReference>
<dbReference type="InterPro" id="IPR011831">
    <property type="entry name" value="ADP-Glc_PPase"/>
</dbReference>
<dbReference type="InterPro" id="IPR005836">
    <property type="entry name" value="ADP_Glu_pyroP_CS"/>
</dbReference>
<dbReference type="InterPro" id="IPR023049">
    <property type="entry name" value="GlgC_bac"/>
</dbReference>
<dbReference type="InterPro" id="IPR056818">
    <property type="entry name" value="GlmU/GlgC-like_hexapep"/>
</dbReference>
<dbReference type="InterPro" id="IPR005835">
    <property type="entry name" value="NTP_transferase_dom"/>
</dbReference>
<dbReference type="InterPro" id="IPR029044">
    <property type="entry name" value="Nucleotide-diphossugar_trans"/>
</dbReference>
<dbReference type="InterPro" id="IPR011004">
    <property type="entry name" value="Trimer_LpxA-like_sf"/>
</dbReference>
<dbReference type="NCBIfam" id="TIGR02091">
    <property type="entry name" value="glgC"/>
    <property type="match status" value="1"/>
</dbReference>
<dbReference type="NCBIfam" id="NF001947">
    <property type="entry name" value="PRK00725.1"/>
    <property type="match status" value="1"/>
</dbReference>
<dbReference type="NCBIfam" id="NF002023">
    <property type="entry name" value="PRK00844.1"/>
    <property type="match status" value="1"/>
</dbReference>
<dbReference type="PANTHER" id="PTHR43523:SF2">
    <property type="entry name" value="GLUCOSE-1-PHOSPHATE ADENYLYLTRANSFERASE"/>
    <property type="match status" value="1"/>
</dbReference>
<dbReference type="PANTHER" id="PTHR43523">
    <property type="entry name" value="GLUCOSE-1-PHOSPHATE ADENYLYLTRANSFERASE-RELATED"/>
    <property type="match status" value="1"/>
</dbReference>
<dbReference type="Pfam" id="PF24894">
    <property type="entry name" value="Hexapep_GlmU"/>
    <property type="match status" value="1"/>
</dbReference>
<dbReference type="Pfam" id="PF00483">
    <property type="entry name" value="NTP_transferase"/>
    <property type="match status" value="1"/>
</dbReference>
<dbReference type="SUPFAM" id="SSF53448">
    <property type="entry name" value="Nucleotide-diphospho-sugar transferases"/>
    <property type="match status" value="1"/>
</dbReference>
<dbReference type="SUPFAM" id="SSF51161">
    <property type="entry name" value="Trimeric LpxA-like enzymes"/>
    <property type="match status" value="1"/>
</dbReference>
<dbReference type="PROSITE" id="PS00808">
    <property type="entry name" value="ADP_GLC_PYROPHOSPH_1"/>
    <property type="match status" value="1"/>
</dbReference>
<dbReference type="PROSITE" id="PS00809">
    <property type="entry name" value="ADP_GLC_PYROPHOSPH_2"/>
    <property type="match status" value="1"/>
</dbReference>
<dbReference type="PROSITE" id="PS00810">
    <property type="entry name" value="ADP_GLC_PYROPHOSPH_3"/>
    <property type="match status" value="1"/>
</dbReference>
<evidence type="ECO:0000255" key="1">
    <source>
        <dbReference type="HAMAP-Rule" id="MF_00624"/>
    </source>
</evidence>
<comment type="function">
    <text evidence="1">Involved in the biosynthesis of ADP-glucose, a building block required for the elongation reactions to produce glycogen. Catalyzes the reaction between ATP and alpha-D-glucose 1-phosphate (G1P) to produce pyrophosphate and ADP-Glc.</text>
</comment>
<comment type="catalytic activity">
    <reaction evidence="1">
        <text>alpha-D-glucose 1-phosphate + ATP + H(+) = ADP-alpha-D-glucose + diphosphate</text>
        <dbReference type="Rhea" id="RHEA:12120"/>
        <dbReference type="ChEBI" id="CHEBI:15378"/>
        <dbReference type="ChEBI" id="CHEBI:30616"/>
        <dbReference type="ChEBI" id="CHEBI:33019"/>
        <dbReference type="ChEBI" id="CHEBI:57498"/>
        <dbReference type="ChEBI" id="CHEBI:58601"/>
        <dbReference type="EC" id="2.7.7.27"/>
    </reaction>
</comment>
<comment type="pathway">
    <text evidence="1">Glycan biosynthesis; glycogen biosynthesis.</text>
</comment>
<comment type="subunit">
    <text evidence="1">Homotetramer.</text>
</comment>
<comment type="similarity">
    <text evidence="1">Belongs to the bacterial/plant glucose-1-phosphate adenylyltransferase family.</text>
</comment>
<feature type="chain" id="PRO_0000261891" description="Glucose-1-phosphate adenylyltransferase">
    <location>
        <begin position="1"/>
        <end position="420"/>
    </location>
</feature>
<feature type="binding site" evidence="1">
    <location>
        <position position="107"/>
    </location>
    <ligand>
        <name>alpha-D-glucose 1-phosphate</name>
        <dbReference type="ChEBI" id="CHEBI:58601"/>
    </ligand>
</feature>
<feature type="binding site" evidence="1">
    <location>
        <position position="172"/>
    </location>
    <ligand>
        <name>alpha-D-glucose 1-phosphate</name>
        <dbReference type="ChEBI" id="CHEBI:58601"/>
    </ligand>
</feature>
<feature type="binding site" evidence="1">
    <location>
        <begin position="187"/>
        <end position="188"/>
    </location>
    <ligand>
        <name>alpha-D-glucose 1-phosphate</name>
        <dbReference type="ChEBI" id="CHEBI:58601"/>
    </ligand>
</feature>
<feature type="binding site" evidence="1">
    <location>
        <position position="205"/>
    </location>
    <ligand>
        <name>alpha-D-glucose 1-phosphate</name>
        <dbReference type="ChEBI" id="CHEBI:58601"/>
    </ligand>
</feature>
<protein>
    <recommendedName>
        <fullName evidence="1">Glucose-1-phosphate adenylyltransferase</fullName>
        <ecNumber evidence="1">2.7.7.27</ecNumber>
    </recommendedName>
    <alternativeName>
        <fullName evidence="1">ADP-glucose pyrophosphorylase</fullName>
        <shortName evidence="1">ADPGlc PPase</shortName>
    </alternativeName>
    <alternativeName>
        <fullName evidence="1">ADP-glucose synthase</fullName>
    </alternativeName>
</protein>
<organism>
    <name type="scientific">Rhodopseudomonas palustris (strain BisB18)</name>
    <dbReference type="NCBI Taxonomy" id="316056"/>
    <lineage>
        <taxon>Bacteria</taxon>
        <taxon>Pseudomonadati</taxon>
        <taxon>Pseudomonadota</taxon>
        <taxon>Alphaproteobacteria</taxon>
        <taxon>Hyphomicrobiales</taxon>
        <taxon>Nitrobacteraceae</taxon>
        <taxon>Rhodopseudomonas</taxon>
    </lineage>
</organism>
<name>GLGC_RHOPB</name>